<name>ATPE_BORPD</name>
<accession>A9HY45</accession>
<protein>
    <recommendedName>
        <fullName evidence="1">ATP synthase epsilon chain</fullName>
    </recommendedName>
    <alternativeName>
        <fullName evidence="1">ATP synthase F1 sector epsilon subunit</fullName>
    </alternativeName>
    <alternativeName>
        <fullName evidence="1">F-ATPase epsilon subunit</fullName>
    </alternativeName>
</protein>
<sequence length="141" mass="14777">MATLQVDVVSAEEAIFAGEAKFVTLPGEAGELGILPGHTPLISRIRPGTVKIVRADGGEENIFVAGGILEVQPGMVTVLADTAIRAADLDEARAVAAREKAEEALRNAKDKADIAVVEAELAMLAAQAVAARKLRQTRNTH</sequence>
<comment type="function">
    <text evidence="1">Produces ATP from ADP in the presence of a proton gradient across the membrane.</text>
</comment>
<comment type="subunit">
    <text evidence="1">F-type ATPases have 2 components, CF(1) - the catalytic core - and CF(0) - the membrane proton channel. CF(1) has five subunits: alpha(3), beta(3), gamma(1), delta(1), epsilon(1). CF(0) has three main subunits: a, b and c.</text>
</comment>
<comment type="subcellular location">
    <subcellularLocation>
        <location evidence="1">Cell inner membrane</location>
        <topology evidence="1">Peripheral membrane protein</topology>
    </subcellularLocation>
</comment>
<comment type="similarity">
    <text evidence="1">Belongs to the ATPase epsilon chain family.</text>
</comment>
<dbReference type="EMBL" id="AM902716">
    <property type="protein sequence ID" value="CAP40675.1"/>
    <property type="molecule type" value="Genomic_DNA"/>
</dbReference>
<dbReference type="SMR" id="A9HY45"/>
<dbReference type="STRING" id="94624.Bpet0343"/>
<dbReference type="KEGG" id="bpt:Bpet0343"/>
<dbReference type="eggNOG" id="COG0355">
    <property type="taxonomic scope" value="Bacteria"/>
</dbReference>
<dbReference type="Proteomes" id="UP000001225">
    <property type="component" value="Chromosome"/>
</dbReference>
<dbReference type="GO" id="GO:0005886">
    <property type="term" value="C:plasma membrane"/>
    <property type="evidence" value="ECO:0007669"/>
    <property type="project" value="UniProtKB-SubCell"/>
</dbReference>
<dbReference type="GO" id="GO:0045259">
    <property type="term" value="C:proton-transporting ATP synthase complex"/>
    <property type="evidence" value="ECO:0007669"/>
    <property type="project" value="UniProtKB-KW"/>
</dbReference>
<dbReference type="GO" id="GO:0005524">
    <property type="term" value="F:ATP binding"/>
    <property type="evidence" value="ECO:0007669"/>
    <property type="project" value="UniProtKB-UniRule"/>
</dbReference>
<dbReference type="GO" id="GO:0046933">
    <property type="term" value="F:proton-transporting ATP synthase activity, rotational mechanism"/>
    <property type="evidence" value="ECO:0007669"/>
    <property type="project" value="UniProtKB-UniRule"/>
</dbReference>
<dbReference type="CDD" id="cd12152">
    <property type="entry name" value="F1-ATPase_delta"/>
    <property type="match status" value="1"/>
</dbReference>
<dbReference type="FunFam" id="2.60.15.10:FF:000001">
    <property type="entry name" value="ATP synthase epsilon chain"/>
    <property type="match status" value="1"/>
</dbReference>
<dbReference type="Gene3D" id="2.60.15.10">
    <property type="entry name" value="F0F1 ATP synthase delta/epsilon subunit, N-terminal"/>
    <property type="match status" value="1"/>
</dbReference>
<dbReference type="HAMAP" id="MF_00530">
    <property type="entry name" value="ATP_synth_epsil_bac"/>
    <property type="match status" value="1"/>
</dbReference>
<dbReference type="InterPro" id="IPR036794">
    <property type="entry name" value="ATP_F1_dsu/esu_C_sf"/>
</dbReference>
<dbReference type="InterPro" id="IPR001469">
    <property type="entry name" value="ATP_synth_F1_dsu/esu"/>
</dbReference>
<dbReference type="InterPro" id="IPR020546">
    <property type="entry name" value="ATP_synth_F1_dsu/esu_N"/>
</dbReference>
<dbReference type="InterPro" id="IPR036771">
    <property type="entry name" value="ATPsynth_dsu/esu_N"/>
</dbReference>
<dbReference type="NCBIfam" id="TIGR01216">
    <property type="entry name" value="ATP_synt_epsi"/>
    <property type="match status" value="1"/>
</dbReference>
<dbReference type="NCBIfam" id="NF001847">
    <property type="entry name" value="PRK00571.1-4"/>
    <property type="match status" value="1"/>
</dbReference>
<dbReference type="PANTHER" id="PTHR13822">
    <property type="entry name" value="ATP SYNTHASE DELTA/EPSILON CHAIN"/>
    <property type="match status" value="1"/>
</dbReference>
<dbReference type="PANTHER" id="PTHR13822:SF10">
    <property type="entry name" value="ATP SYNTHASE EPSILON CHAIN, CHLOROPLASTIC"/>
    <property type="match status" value="1"/>
</dbReference>
<dbReference type="Pfam" id="PF02823">
    <property type="entry name" value="ATP-synt_DE_N"/>
    <property type="match status" value="1"/>
</dbReference>
<dbReference type="SUPFAM" id="SSF46604">
    <property type="entry name" value="Epsilon subunit of F1F0-ATP synthase C-terminal domain"/>
    <property type="match status" value="1"/>
</dbReference>
<dbReference type="SUPFAM" id="SSF51344">
    <property type="entry name" value="Epsilon subunit of F1F0-ATP synthase N-terminal domain"/>
    <property type="match status" value="1"/>
</dbReference>
<organism>
    <name type="scientific">Bordetella petrii (strain ATCC BAA-461 / DSM 12804 / CCUG 43448)</name>
    <dbReference type="NCBI Taxonomy" id="340100"/>
    <lineage>
        <taxon>Bacteria</taxon>
        <taxon>Pseudomonadati</taxon>
        <taxon>Pseudomonadota</taxon>
        <taxon>Betaproteobacteria</taxon>
        <taxon>Burkholderiales</taxon>
        <taxon>Alcaligenaceae</taxon>
        <taxon>Bordetella</taxon>
    </lineage>
</organism>
<keyword id="KW-0066">ATP synthesis</keyword>
<keyword id="KW-0997">Cell inner membrane</keyword>
<keyword id="KW-1003">Cell membrane</keyword>
<keyword id="KW-0139">CF(1)</keyword>
<keyword id="KW-0375">Hydrogen ion transport</keyword>
<keyword id="KW-0406">Ion transport</keyword>
<keyword id="KW-0472">Membrane</keyword>
<keyword id="KW-0813">Transport</keyword>
<proteinExistence type="inferred from homology"/>
<evidence type="ECO:0000255" key="1">
    <source>
        <dbReference type="HAMAP-Rule" id="MF_00530"/>
    </source>
</evidence>
<feature type="chain" id="PRO_1000127828" description="ATP synthase epsilon chain">
    <location>
        <begin position="1"/>
        <end position="141"/>
    </location>
</feature>
<reference key="1">
    <citation type="journal article" date="2008" name="BMC Genomics">
        <title>The missing link: Bordetella petrii is endowed with both the metabolic versatility of environmental bacteria and virulence traits of pathogenic Bordetellae.</title>
        <authorList>
            <person name="Gross R."/>
            <person name="Guzman C.A."/>
            <person name="Sebaihia M."/>
            <person name="Martin dos Santos V.A.P."/>
            <person name="Pieper D.H."/>
            <person name="Koebnik R."/>
            <person name="Lechner M."/>
            <person name="Bartels D."/>
            <person name="Buhrmester J."/>
            <person name="Choudhuri J.V."/>
            <person name="Ebensen T."/>
            <person name="Gaigalat L."/>
            <person name="Herrmann S."/>
            <person name="Khachane A.N."/>
            <person name="Larisch C."/>
            <person name="Link S."/>
            <person name="Linke B."/>
            <person name="Meyer F."/>
            <person name="Mormann S."/>
            <person name="Nakunst D."/>
            <person name="Rueckert C."/>
            <person name="Schneiker-Bekel S."/>
            <person name="Schulze K."/>
            <person name="Voerholter F.-J."/>
            <person name="Yevsa T."/>
            <person name="Engle J.T."/>
            <person name="Goldman W.E."/>
            <person name="Puehler A."/>
            <person name="Goebel U.B."/>
            <person name="Goesmann A."/>
            <person name="Bloecker H."/>
            <person name="Kaiser O."/>
            <person name="Martinez-Arias R."/>
        </authorList>
    </citation>
    <scope>NUCLEOTIDE SEQUENCE [LARGE SCALE GENOMIC DNA]</scope>
    <source>
        <strain>ATCC BAA-461 / DSM 12804 / CCUG 43448</strain>
    </source>
</reference>
<gene>
    <name evidence="1" type="primary">atpC</name>
    <name type="ordered locus">Bpet0343</name>
</gene>